<feature type="chain" id="PRO_5000166399" description="ATP synthase subunit b">
    <location>
        <begin position="1"/>
        <end position="203"/>
    </location>
</feature>
<feature type="transmembrane region" description="Helical" evidence="1">
    <location>
        <begin position="14"/>
        <end position="34"/>
    </location>
</feature>
<protein>
    <recommendedName>
        <fullName evidence="1">ATP synthase subunit b</fullName>
    </recommendedName>
    <alternativeName>
        <fullName evidence="1">ATP synthase F(0) sector subunit b</fullName>
    </alternativeName>
    <alternativeName>
        <fullName evidence="1">ATPase subunit I</fullName>
    </alternativeName>
    <alternativeName>
        <fullName evidence="1">F-type ATPase subunit b</fullName>
        <shortName evidence="1">F-ATPase subunit b</shortName>
    </alternativeName>
</protein>
<dbReference type="EMBL" id="CP000478">
    <property type="protein sequence ID" value="ABK18264.1"/>
    <property type="molecule type" value="Genomic_DNA"/>
</dbReference>
<dbReference type="RefSeq" id="WP_011699432.1">
    <property type="nucleotide sequence ID" value="NC_008554.1"/>
</dbReference>
<dbReference type="SMR" id="A0LLG2"/>
<dbReference type="STRING" id="335543.Sfum_2586"/>
<dbReference type="KEGG" id="sfu:Sfum_2586"/>
<dbReference type="eggNOG" id="COG0711">
    <property type="taxonomic scope" value="Bacteria"/>
</dbReference>
<dbReference type="HOGENOM" id="CLU_079215_3_0_7"/>
<dbReference type="InParanoid" id="A0LLG2"/>
<dbReference type="OrthoDB" id="5471016at2"/>
<dbReference type="Proteomes" id="UP000001784">
    <property type="component" value="Chromosome"/>
</dbReference>
<dbReference type="GO" id="GO:0005886">
    <property type="term" value="C:plasma membrane"/>
    <property type="evidence" value="ECO:0007669"/>
    <property type="project" value="UniProtKB-SubCell"/>
</dbReference>
<dbReference type="GO" id="GO:0045259">
    <property type="term" value="C:proton-transporting ATP synthase complex"/>
    <property type="evidence" value="ECO:0007669"/>
    <property type="project" value="UniProtKB-KW"/>
</dbReference>
<dbReference type="GO" id="GO:0046933">
    <property type="term" value="F:proton-transporting ATP synthase activity, rotational mechanism"/>
    <property type="evidence" value="ECO:0007669"/>
    <property type="project" value="UniProtKB-UniRule"/>
</dbReference>
<dbReference type="GO" id="GO:0046961">
    <property type="term" value="F:proton-transporting ATPase activity, rotational mechanism"/>
    <property type="evidence" value="ECO:0007669"/>
    <property type="project" value="TreeGrafter"/>
</dbReference>
<dbReference type="CDD" id="cd06503">
    <property type="entry name" value="ATP-synt_Fo_b"/>
    <property type="match status" value="1"/>
</dbReference>
<dbReference type="HAMAP" id="MF_01398">
    <property type="entry name" value="ATP_synth_b_bprime"/>
    <property type="match status" value="1"/>
</dbReference>
<dbReference type="InterPro" id="IPR002146">
    <property type="entry name" value="ATP_synth_b/b'su_bac/chlpt"/>
</dbReference>
<dbReference type="InterPro" id="IPR050059">
    <property type="entry name" value="ATP_synthase_B_chain"/>
</dbReference>
<dbReference type="PANTHER" id="PTHR33445:SF1">
    <property type="entry name" value="ATP SYNTHASE SUBUNIT B"/>
    <property type="match status" value="1"/>
</dbReference>
<dbReference type="PANTHER" id="PTHR33445">
    <property type="entry name" value="ATP SYNTHASE SUBUNIT B', CHLOROPLASTIC"/>
    <property type="match status" value="1"/>
</dbReference>
<dbReference type="Pfam" id="PF00430">
    <property type="entry name" value="ATP-synt_B"/>
    <property type="match status" value="1"/>
</dbReference>
<keyword id="KW-0066">ATP synthesis</keyword>
<keyword id="KW-0997">Cell inner membrane</keyword>
<keyword id="KW-1003">Cell membrane</keyword>
<keyword id="KW-0138">CF(0)</keyword>
<keyword id="KW-0375">Hydrogen ion transport</keyword>
<keyword id="KW-0406">Ion transport</keyword>
<keyword id="KW-0472">Membrane</keyword>
<keyword id="KW-1185">Reference proteome</keyword>
<keyword id="KW-0812">Transmembrane</keyword>
<keyword id="KW-1133">Transmembrane helix</keyword>
<keyword id="KW-0813">Transport</keyword>
<evidence type="ECO:0000255" key="1">
    <source>
        <dbReference type="HAMAP-Rule" id="MF_01398"/>
    </source>
</evidence>
<gene>
    <name evidence="1" type="primary">atpF</name>
    <name type="ordered locus">Sfum_2586</name>
</gene>
<comment type="function">
    <text evidence="1">F(1)F(0) ATP synthase produces ATP from ADP in the presence of a proton or sodium gradient. F-type ATPases consist of two structural domains, F(1) containing the extramembraneous catalytic core and F(0) containing the membrane proton channel, linked together by a central stalk and a peripheral stalk. During catalysis, ATP synthesis in the catalytic domain of F(1) is coupled via a rotary mechanism of the central stalk subunits to proton translocation.</text>
</comment>
<comment type="function">
    <text evidence="1">Component of the F(0) channel, it forms part of the peripheral stalk, linking F(1) to F(0).</text>
</comment>
<comment type="subunit">
    <text evidence="1">F-type ATPases have 2 components, F(1) - the catalytic core - and F(0) - the membrane proton channel. F(1) has five subunits: alpha(3), beta(3), gamma(1), delta(1), epsilon(1). F(0) has three main subunits: a(1), b(2) and c(10-14). The alpha and beta chains form an alternating ring which encloses part of the gamma chain. F(1) is attached to F(0) by a central stalk formed by the gamma and epsilon chains, while a peripheral stalk is formed by the delta and b chains.</text>
</comment>
<comment type="subcellular location">
    <subcellularLocation>
        <location evidence="1">Cell inner membrane</location>
        <topology evidence="1">Single-pass membrane protein</topology>
    </subcellularLocation>
</comment>
<comment type="similarity">
    <text evidence="1">Belongs to the ATPase B chain family.</text>
</comment>
<accession>A0LLG2</accession>
<sequence>MHAGVRGKKERAKFVWPLLGAGLLLAAEGVAWASGGGGEHGGGHLNWSDFLARTLVFVITFSILFKLLKKPIAGFFSSRKAEIQRLLSELELKQKEAEQNHAECKAKLAALEVETKKIVDELIAEGEVERQKIIEAAEKQADYLRQQADVAIQQEIKAAREKLKLEISELSVAAAEEILRKNMKAKDQDRLVRDFMKRVVEAK</sequence>
<proteinExistence type="inferred from homology"/>
<organism>
    <name type="scientific">Syntrophobacter fumaroxidans (strain DSM 10017 / MPOB)</name>
    <dbReference type="NCBI Taxonomy" id="335543"/>
    <lineage>
        <taxon>Bacteria</taxon>
        <taxon>Pseudomonadati</taxon>
        <taxon>Thermodesulfobacteriota</taxon>
        <taxon>Syntrophobacteria</taxon>
        <taxon>Syntrophobacterales</taxon>
        <taxon>Syntrophobacteraceae</taxon>
        <taxon>Syntrophobacter</taxon>
    </lineage>
</organism>
<reference key="1">
    <citation type="submission" date="2006-10" db="EMBL/GenBank/DDBJ databases">
        <title>Complete sequence of Syntrophobacter fumaroxidans MPOB.</title>
        <authorList>
            <consortium name="US DOE Joint Genome Institute"/>
            <person name="Copeland A."/>
            <person name="Lucas S."/>
            <person name="Lapidus A."/>
            <person name="Barry K."/>
            <person name="Detter J.C."/>
            <person name="Glavina del Rio T."/>
            <person name="Hammon N."/>
            <person name="Israni S."/>
            <person name="Pitluck S."/>
            <person name="Goltsman E.G."/>
            <person name="Martinez M."/>
            <person name="Schmutz J."/>
            <person name="Larimer F."/>
            <person name="Land M."/>
            <person name="Hauser L."/>
            <person name="Kyrpides N."/>
            <person name="Kim E."/>
            <person name="Boone D.R."/>
            <person name="Brockman F."/>
            <person name="Culley D."/>
            <person name="Ferry J."/>
            <person name="Gunsalus R."/>
            <person name="McInerney M.J."/>
            <person name="Morrison M."/>
            <person name="Plugge C."/>
            <person name="Rohlin L."/>
            <person name="Scholten J."/>
            <person name="Sieber J."/>
            <person name="Stams A.J.M."/>
            <person name="Worm P."/>
            <person name="Henstra A.M."/>
            <person name="Richardson P."/>
        </authorList>
    </citation>
    <scope>NUCLEOTIDE SEQUENCE [LARGE SCALE GENOMIC DNA]</scope>
    <source>
        <strain>DSM 10017 / MPOB</strain>
    </source>
</reference>
<name>ATPF_SYNFM</name>